<organism>
    <name type="scientific">Haemophilus ducreyi (strain 35000HP / ATCC 700724)</name>
    <dbReference type="NCBI Taxonomy" id="233412"/>
    <lineage>
        <taxon>Bacteria</taxon>
        <taxon>Pseudomonadati</taxon>
        <taxon>Pseudomonadota</taxon>
        <taxon>Gammaproteobacteria</taxon>
        <taxon>Pasteurellales</taxon>
        <taxon>Pasteurellaceae</taxon>
        <taxon>Haemophilus</taxon>
    </lineage>
</organism>
<proteinExistence type="inferred from homology"/>
<sequence>MNKPVAIFLMGPTASGKTDLAIALRKQLPVEVISVDSALIYKEMDIGTAKPTAAELAQAPHRLIDILDPKESYSAMHFHADALHAMADITASGRIPLLVGGTMLYYKALLEGLSPLPSANEHIRTEIEAHANQYGWASLHQQLTQIDPLAASRINANDSQRINRALEVFYLTGKNLTELTAQQGECLPYQVLQFAIAPQERAVLHQRIEQRFHKMMELGFLTEVEKLYARGDLHPDLPAIRCVGYRQMWQHLAGEISLDEAIYKGICATRQLAKRQLTWLRGWRSEITWLDSLDPTSSQEKMIQNLEQNFIKL</sequence>
<feature type="chain" id="PRO_0000163923" description="tRNA dimethylallyltransferase">
    <location>
        <begin position="1"/>
        <end position="313"/>
    </location>
</feature>
<feature type="region of interest" description="Interaction with substrate tRNA" evidence="1">
    <location>
        <begin position="36"/>
        <end position="39"/>
    </location>
</feature>
<feature type="region of interest" description="Interaction with substrate tRNA" evidence="1">
    <location>
        <begin position="160"/>
        <end position="164"/>
    </location>
</feature>
<feature type="region of interest" description="Interaction with substrate tRNA" evidence="1">
    <location>
        <begin position="241"/>
        <end position="246"/>
    </location>
</feature>
<feature type="binding site" evidence="1">
    <location>
        <begin position="11"/>
        <end position="18"/>
    </location>
    <ligand>
        <name>ATP</name>
        <dbReference type="ChEBI" id="CHEBI:30616"/>
    </ligand>
</feature>
<feature type="binding site" evidence="1">
    <location>
        <begin position="13"/>
        <end position="18"/>
    </location>
    <ligand>
        <name>substrate</name>
    </ligand>
</feature>
<feature type="site" description="Interaction with substrate tRNA" evidence="1">
    <location>
        <position position="102"/>
    </location>
</feature>
<feature type="site" description="Interaction with substrate tRNA" evidence="1">
    <location>
        <position position="124"/>
    </location>
</feature>
<evidence type="ECO:0000255" key="1">
    <source>
        <dbReference type="HAMAP-Rule" id="MF_00185"/>
    </source>
</evidence>
<comment type="function">
    <text evidence="1">Catalyzes the transfer of a dimethylallyl group onto the adenine at position 37 in tRNAs that read codons beginning with uridine, leading to the formation of N6-(dimethylallyl)adenosine (i(6)A).</text>
</comment>
<comment type="catalytic activity">
    <reaction evidence="1">
        <text>adenosine(37) in tRNA + dimethylallyl diphosphate = N(6)-dimethylallyladenosine(37) in tRNA + diphosphate</text>
        <dbReference type="Rhea" id="RHEA:26482"/>
        <dbReference type="Rhea" id="RHEA-COMP:10162"/>
        <dbReference type="Rhea" id="RHEA-COMP:10375"/>
        <dbReference type="ChEBI" id="CHEBI:33019"/>
        <dbReference type="ChEBI" id="CHEBI:57623"/>
        <dbReference type="ChEBI" id="CHEBI:74411"/>
        <dbReference type="ChEBI" id="CHEBI:74415"/>
        <dbReference type="EC" id="2.5.1.75"/>
    </reaction>
</comment>
<comment type="cofactor">
    <cofactor evidence="1">
        <name>Mg(2+)</name>
        <dbReference type="ChEBI" id="CHEBI:18420"/>
    </cofactor>
</comment>
<comment type="subunit">
    <text evidence="1">Monomer.</text>
</comment>
<comment type="similarity">
    <text evidence="1">Belongs to the IPP transferase family.</text>
</comment>
<protein>
    <recommendedName>
        <fullName evidence="1">tRNA dimethylallyltransferase</fullName>
        <ecNumber evidence="1">2.5.1.75</ecNumber>
    </recommendedName>
    <alternativeName>
        <fullName evidence="1">Dimethylallyl diphosphate:tRNA dimethylallyltransferase</fullName>
        <shortName evidence="1">DMAPP:tRNA dimethylallyltransferase</shortName>
        <shortName evidence="1">DMATase</shortName>
    </alternativeName>
    <alternativeName>
        <fullName evidence="1">Isopentenyl-diphosphate:tRNA isopentenyltransferase</fullName>
        <shortName evidence="1">IPP transferase</shortName>
        <shortName evidence="1">IPPT</shortName>
        <shortName evidence="1">IPTase</shortName>
    </alternativeName>
</protein>
<accession>Q7U338</accession>
<keyword id="KW-0067">ATP-binding</keyword>
<keyword id="KW-0460">Magnesium</keyword>
<keyword id="KW-0547">Nucleotide-binding</keyword>
<keyword id="KW-1185">Reference proteome</keyword>
<keyword id="KW-0808">Transferase</keyword>
<keyword id="KW-0819">tRNA processing</keyword>
<gene>
    <name evidence="1" type="primary">miaA</name>
    <name type="ordered locus">HD_0742</name>
</gene>
<name>MIAA_HAEDU</name>
<reference key="1">
    <citation type="submission" date="2003-06" db="EMBL/GenBank/DDBJ databases">
        <title>The complete genome sequence of Haemophilus ducreyi.</title>
        <authorList>
            <person name="Munson R.S. Jr."/>
            <person name="Ray W.C."/>
            <person name="Mahairas G."/>
            <person name="Sabo P."/>
            <person name="Mungur R."/>
            <person name="Johnson L."/>
            <person name="Nguyen D."/>
            <person name="Wang J."/>
            <person name="Forst C."/>
            <person name="Hood L."/>
        </authorList>
    </citation>
    <scope>NUCLEOTIDE SEQUENCE [LARGE SCALE GENOMIC DNA]</scope>
    <source>
        <strain>35000HP / ATCC 700724</strain>
    </source>
</reference>
<dbReference type="EC" id="2.5.1.75" evidence="1"/>
<dbReference type="EMBL" id="AE017143">
    <property type="protein sequence ID" value="AAP95652.1"/>
    <property type="molecule type" value="Genomic_DNA"/>
</dbReference>
<dbReference type="RefSeq" id="WP_010944704.1">
    <property type="nucleotide sequence ID" value="NC_002940.2"/>
</dbReference>
<dbReference type="SMR" id="Q7U338"/>
<dbReference type="STRING" id="233412.HD_0742"/>
<dbReference type="KEGG" id="hdu:HD_0742"/>
<dbReference type="eggNOG" id="COG0324">
    <property type="taxonomic scope" value="Bacteria"/>
</dbReference>
<dbReference type="HOGENOM" id="CLU_032616_0_0_6"/>
<dbReference type="OrthoDB" id="9776390at2"/>
<dbReference type="Proteomes" id="UP000001022">
    <property type="component" value="Chromosome"/>
</dbReference>
<dbReference type="GO" id="GO:0005524">
    <property type="term" value="F:ATP binding"/>
    <property type="evidence" value="ECO:0007669"/>
    <property type="project" value="UniProtKB-UniRule"/>
</dbReference>
<dbReference type="GO" id="GO:0052381">
    <property type="term" value="F:tRNA dimethylallyltransferase activity"/>
    <property type="evidence" value="ECO:0007669"/>
    <property type="project" value="UniProtKB-UniRule"/>
</dbReference>
<dbReference type="GO" id="GO:0006400">
    <property type="term" value="P:tRNA modification"/>
    <property type="evidence" value="ECO:0007669"/>
    <property type="project" value="TreeGrafter"/>
</dbReference>
<dbReference type="FunFam" id="1.10.20.140:FF:000001">
    <property type="entry name" value="tRNA dimethylallyltransferase"/>
    <property type="match status" value="1"/>
</dbReference>
<dbReference type="Gene3D" id="1.10.20.140">
    <property type="match status" value="1"/>
</dbReference>
<dbReference type="Gene3D" id="3.40.50.300">
    <property type="entry name" value="P-loop containing nucleotide triphosphate hydrolases"/>
    <property type="match status" value="1"/>
</dbReference>
<dbReference type="HAMAP" id="MF_00185">
    <property type="entry name" value="IPP_trans"/>
    <property type="match status" value="1"/>
</dbReference>
<dbReference type="InterPro" id="IPR039657">
    <property type="entry name" value="Dimethylallyltransferase"/>
</dbReference>
<dbReference type="InterPro" id="IPR018022">
    <property type="entry name" value="IPT"/>
</dbReference>
<dbReference type="InterPro" id="IPR027417">
    <property type="entry name" value="P-loop_NTPase"/>
</dbReference>
<dbReference type="NCBIfam" id="TIGR00174">
    <property type="entry name" value="miaA"/>
    <property type="match status" value="1"/>
</dbReference>
<dbReference type="PANTHER" id="PTHR11088">
    <property type="entry name" value="TRNA DIMETHYLALLYLTRANSFERASE"/>
    <property type="match status" value="1"/>
</dbReference>
<dbReference type="PANTHER" id="PTHR11088:SF60">
    <property type="entry name" value="TRNA DIMETHYLALLYLTRANSFERASE"/>
    <property type="match status" value="1"/>
</dbReference>
<dbReference type="Pfam" id="PF01715">
    <property type="entry name" value="IPPT"/>
    <property type="match status" value="1"/>
</dbReference>
<dbReference type="SUPFAM" id="SSF52540">
    <property type="entry name" value="P-loop containing nucleoside triphosphate hydrolases"/>
    <property type="match status" value="1"/>
</dbReference>